<accession>B4EAN3</accession>
<proteinExistence type="inferred from homology"/>
<gene>
    <name evidence="1" type="primary">rplS</name>
    <name type="ordered locus">BceJ2315_28610</name>
    <name type="ORF">BCAL2925</name>
</gene>
<organism>
    <name type="scientific">Burkholderia cenocepacia (strain ATCC BAA-245 / DSM 16553 / LMG 16656 / NCTC 13227 / J2315 / CF5610)</name>
    <name type="common">Burkholderia cepacia (strain J2315)</name>
    <dbReference type="NCBI Taxonomy" id="216591"/>
    <lineage>
        <taxon>Bacteria</taxon>
        <taxon>Pseudomonadati</taxon>
        <taxon>Pseudomonadota</taxon>
        <taxon>Betaproteobacteria</taxon>
        <taxon>Burkholderiales</taxon>
        <taxon>Burkholderiaceae</taxon>
        <taxon>Burkholderia</taxon>
        <taxon>Burkholderia cepacia complex</taxon>
    </lineage>
</organism>
<evidence type="ECO:0000255" key="1">
    <source>
        <dbReference type="HAMAP-Rule" id="MF_00402"/>
    </source>
</evidence>
<evidence type="ECO:0000305" key="2"/>
<name>RL19_BURCJ</name>
<reference key="1">
    <citation type="journal article" date="2009" name="J. Bacteriol.">
        <title>The genome of Burkholderia cenocepacia J2315, an epidemic pathogen of cystic fibrosis patients.</title>
        <authorList>
            <person name="Holden M.T."/>
            <person name="Seth-Smith H.M."/>
            <person name="Crossman L.C."/>
            <person name="Sebaihia M."/>
            <person name="Bentley S.D."/>
            <person name="Cerdeno-Tarraga A.M."/>
            <person name="Thomson N.R."/>
            <person name="Bason N."/>
            <person name="Quail M.A."/>
            <person name="Sharp S."/>
            <person name="Cherevach I."/>
            <person name="Churcher C."/>
            <person name="Goodhead I."/>
            <person name="Hauser H."/>
            <person name="Holroyd N."/>
            <person name="Mungall K."/>
            <person name="Scott P."/>
            <person name="Walker D."/>
            <person name="White B."/>
            <person name="Rose H."/>
            <person name="Iversen P."/>
            <person name="Mil-Homens D."/>
            <person name="Rocha E.P."/>
            <person name="Fialho A.M."/>
            <person name="Baldwin A."/>
            <person name="Dowson C."/>
            <person name="Barrell B.G."/>
            <person name="Govan J.R."/>
            <person name="Vandamme P."/>
            <person name="Hart C.A."/>
            <person name="Mahenthiralingam E."/>
            <person name="Parkhill J."/>
        </authorList>
    </citation>
    <scope>NUCLEOTIDE SEQUENCE [LARGE SCALE GENOMIC DNA]</scope>
    <source>
        <strain>ATCC BAA-245 / DSM 16553 / LMG 16656 / NCTC 13227 / J2315 / CF5610</strain>
    </source>
</reference>
<feature type="chain" id="PRO_1000193800" description="Large ribosomal subunit protein bL19">
    <location>
        <begin position="1"/>
        <end position="130"/>
    </location>
</feature>
<dbReference type="EMBL" id="AM747720">
    <property type="protein sequence ID" value="CAR53224.1"/>
    <property type="molecule type" value="Genomic_DNA"/>
</dbReference>
<dbReference type="RefSeq" id="WP_006486838.1">
    <property type="nucleotide sequence ID" value="NC_011000.1"/>
</dbReference>
<dbReference type="SMR" id="B4EAN3"/>
<dbReference type="GeneID" id="83047824"/>
<dbReference type="KEGG" id="bcj:BCAL2925"/>
<dbReference type="eggNOG" id="COG0335">
    <property type="taxonomic scope" value="Bacteria"/>
</dbReference>
<dbReference type="HOGENOM" id="CLU_103507_1_0_4"/>
<dbReference type="BioCyc" id="BCEN216591:G1G1V-3234-MONOMER"/>
<dbReference type="Proteomes" id="UP000001035">
    <property type="component" value="Chromosome 1"/>
</dbReference>
<dbReference type="GO" id="GO:0022625">
    <property type="term" value="C:cytosolic large ribosomal subunit"/>
    <property type="evidence" value="ECO:0007669"/>
    <property type="project" value="TreeGrafter"/>
</dbReference>
<dbReference type="GO" id="GO:0003735">
    <property type="term" value="F:structural constituent of ribosome"/>
    <property type="evidence" value="ECO:0007669"/>
    <property type="project" value="InterPro"/>
</dbReference>
<dbReference type="GO" id="GO:0006412">
    <property type="term" value="P:translation"/>
    <property type="evidence" value="ECO:0007669"/>
    <property type="project" value="UniProtKB-UniRule"/>
</dbReference>
<dbReference type="FunFam" id="2.30.30.790:FF:000001">
    <property type="entry name" value="50S ribosomal protein L19"/>
    <property type="match status" value="1"/>
</dbReference>
<dbReference type="Gene3D" id="2.30.30.790">
    <property type="match status" value="1"/>
</dbReference>
<dbReference type="HAMAP" id="MF_00402">
    <property type="entry name" value="Ribosomal_bL19"/>
    <property type="match status" value="1"/>
</dbReference>
<dbReference type="InterPro" id="IPR001857">
    <property type="entry name" value="Ribosomal_bL19"/>
</dbReference>
<dbReference type="InterPro" id="IPR018257">
    <property type="entry name" value="Ribosomal_bL19_CS"/>
</dbReference>
<dbReference type="InterPro" id="IPR038657">
    <property type="entry name" value="Ribosomal_bL19_sf"/>
</dbReference>
<dbReference type="InterPro" id="IPR008991">
    <property type="entry name" value="Translation_prot_SH3-like_sf"/>
</dbReference>
<dbReference type="NCBIfam" id="TIGR01024">
    <property type="entry name" value="rplS_bact"/>
    <property type="match status" value="1"/>
</dbReference>
<dbReference type="PANTHER" id="PTHR15680:SF9">
    <property type="entry name" value="LARGE RIBOSOMAL SUBUNIT PROTEIN BL19M"/>
    <property type="match status" value="1"/>
</dbReference>
<dbReference type="PANTHER" id="PTHR15680">
    <property type="entry name" value="RIBOSOMAL PROTEIN L19"/>
    <property type="match status" value="1"/>
</dbReference>
<dbReference type="Pfam" id="PF01245">
    <property type="entry name" value="Ribosomal_L19"/>
    <property type="match status" value="1"/>
</dbReference>
<dbReference type="PIRSF" id="PIRSF002191">
    <property type="entry name" value="Ribosomal_L19"/>
    <property type="match status" value="1"/>
</dbReference>
<dbReference type="PRINTS" id="PR00061">
    <property type="entry name" value="RIBOSOMALL19"/>
</dbReference>
<dbReference type="SUPFAM" id="SSF50104">
    <property type="entry name" value="Translation proteins SH3-like domain"/>
    <property type="match status" value="1"/>
</dbReference>
<dbReference type="PROSITE" id="PS01015">
    <property type="entry name" value="RIBOSOMAL_L19"/>
    <property type="match status" value="1"/>
</dbReference>
<comment type="function">
    <text evidence="1">This protein is located at the 30S-50S ribosomal subunit interface and may play a role in the structure and function of the aminoacyl-tRNA binding site.</text>
</comment>
<comment type="similarity">
    <text evidence="1">Belongs to the bacterial ribosomal protein bL19 family.</text>
</comment>
<keyword id="KW-0687">Ribonucleoprotein</keyword>
<keyword id="KW-0689">Ribosomal protein</keyword>
<protein>
    <recommendedName>
        <fullName evidence="1">Large ribosomal subunit protein bL19</fullName>
    </recommendedName>
    <alternativeName>
        <fullName evidence="2">50S ribosomal protein L19</fullName>
    </alternativeName>
</protein>
<sequence length="130" mass="14515">MNLIAKLEQEEIERALAGKTIPDFAPGDTVIVNVNVVEGNRKRVQAYEGVVIAIRNRGLNSNFIVRKISSGEGVERTFQTYSPLLASIVVKRRGDVRRAKLYYLRERSGKSARIKEKLVSKDRAAAASQE</sequence>